<dbReference type="EC" id="2.1.3.2" evidence="1"/>
<dbReference type="EMBL" id="CP000480">
    <property type="protein sequence ID" value="ABK74784.1"/>
    <property type="molecule type" value="Genomic_DNA"/>
</dbReference>
<dbReference type="EMBL" id="CP001663">
    <property type="protein sequence ID" value="AFP39433.1"/>
    <property type="molecule type" value="Genomic_DNA"/>
</dbReference>
<dbReference type="RefSeq" id="WP_003894427.1">
    <property type="nucleotide sequence ID" value="NZ_SIJM01000002.1"/>
</dbReference>
<dbReference type="RefSeq" id="YP_887359.1">
    <property type="nucleotide sequence ID" value="NC_008596.1"/>
</dbReference>
<dbReference type="SMR" id="A0QWS1"/>
<dbReference type="STRING" id="246196.MSMEG_3043"/>
<dbReference type="PaxDb" id="246196-MSMEI_2969"/>
<dbReference type="KEGG" id="msb:LJ00_15145"/>
<dbReference type="KEGG" id="msg:MSMEI_2969"/>
<dbReference type="KEGG" id="msm:MSMEG_3043"/>
<dbReference type="PATRIC" id="fig|246196.19.peg.3005"/>
<dbReference type="eggNOG" id="COG0540">
    <property type="taxonomic scope" value="Bacteria"/>
</dbReference>
<dbReference type="OrthoDB" id="9774690at2"/>
<dbReference type="UniPathway" id="UPA00070">
    <property type="reaction ID" value="UER00116"/>
</dbReference>
<dbReference type="Proteomes" id="UP000000757">
    <property type="component" value="Chromosome"/>
</dbReference>
<dbReference type="Proteomes" id="UP000006158">
    <property type="component" value="Chromosome"/>
</dbReference>
<dbReference type="GO" id="GO:0005829">
    <property type="term" value="C:cytosol"/>
    <property type="evidence" value="ECO:0007669"/>
    <property type="project" value="TreeGrafter"/>
</dbReference>
<dbReference type="GO" id="GO:0016597">
    <property type="term" value="F:amino acid binding"/>
    <property type="evidence" value="ECO:0007669"/>
    <property type="project" value="InterPro"/>
</dbReference>
<dbReference type="GO" id="GO:0004070">
    <property type="term" value="F:aspartate carbamoyltransferase activity"/>
    <property type="evidence" value="ECO:0007669"/>
    <property type="project" value="UniProtKB-UniRule"/>
</dbReference>
<dbReference type="GO" id="GO:0006207">
    <property type="term" value="P:'de novo' pyrimidine nucleobase biosynthetic process"/>
    <property type="evidence" value="ECO:0007669"/>
    <property type="project" value="InterPro"/>
</dbReference>
<dbReference type="GO" id="GO:0044205">
    <property type="term" value="P:'de novo' UMP biosynthetic process"/>
    <property type="evidence" value="ECO:0007669"/>
    <property type="project" value="UniProtKB-UniRule"/>
</dbReference>
<dbReference type="GO" id="GO:0006520">
    <property type="term" value="P:amino acid metabolic process"/>
    <property type="evidence" value="ECO:0007669"/>
    <property type="project" value="InterPro"/>
</dbReference>
<dbReference type="FunFam" id="3.40.50.1370:FF:000007">
    <property type="entry name" value="Aspartate carbamoyltransferase"/>
    <property type="match status" value="1"/>
</dbReference>
<dbReference type="Gene3D" id="3.40.50.1370">
    <property type="entry name" value="Aspartate/ornithine carbamoyltransferase"/>
    <property type="match status" value="2"/>
</dbReference>
<dbReference type="HAMAP" id="MF_00001">
    <property type="entry name" value="Asp_carb_tr"/>
    <property type="match status" value="1"/>
</dbReference>
<dbReference type="InterPro" id="IPR006132">
    <property type="entry name" value="Asp/Orn_carbamoyltranf_P-bd"/>
</dbReference>
<dbReference type="InterPro" id="IPR006130">
    <property type="entry name" value="Asp/Orn_carbamoylTrfase"/>
</dbReference>
<dbReference type="InterPro" id="IPR036901">
    <property type="entry name" value="Asp/Orn_carbamoylTrfase_sf"/>
</dbReference>
<dbReference type="InterPro" id="IPR002082">
    <property type="entry name" value="Asp_carbamoyltransf"/>
</dbReference>
<dbReference type="InterPro" id="IPR006131">
    <property type="entry name" value="Asp_carbamoyltransf_Asp/Orn-bd"/>
</dbReference>
<dbReference type="NCBIfam" id="TIGR00670">
    <property type="entry name" value="asp_carb_tr"/>
    <property type="match status" value="1"/>
</dbReference>
<dbReference type="NCBIfam" id="NF002032">
    <property type="entry name" value="PRK00856.1"/>
    <property type="match status" value="1"/>
</dbReference>
<dbReference type="PANTHER" id="PTHR45753:SF6">
    <property type="entry name" value="ASPARTATE CARBAMOYLTRANSFERASE"/>
    <property type="match status" value="1"/>
</dbReference>
<dbReference type="PANTHER" id="PTHR45753">
    <property type="entry name" value="ORNITHINE CARBAMOYLTRANSFERASE, MITOCHONDRIAL"/>
    <property type="match status" value="1"/>
</dbReference>
<dbReference type="Pfam" id="PF00185">
    <property type="entry name" value="OTCace"/>
    <property type="match status" value="1"/>
</dbReference>
<dbReference type="Pfam" id="PF02729">
    <property type="entry name" value="OTCace_N"/>
    <property type="match status" value="1"/>
</dbReference>
<dbReference type="PRINTS" id="PR00100">
    <property type="entry name" value="AOTCASE"/>
</dbReference>
<dbReference type="PRINTS" id="PR00101">
    <property type="entry name" value="ATCASE"/>
</dbReference>
<dbReference type="SUPFAM" id="SSF53671">
    <property type="entry name" value="Aspartate/ornithine carbamoyltransferase"/>
    <property type="match status" value="1"/>
</dbReference>
<dbReference type="PROSITE" id="PS00097">
    <property type="entry name" value="CARBAMOYLTRANSFERASE"/>
    <property type="match status" value="1"/>
</dbReference>
<sequence length="318" mass="34349">MTKRHLLSAGDLTRDDATAILDDADRFREALLGREVKKLPTLRGRTIITMFYENSTRTRVSFEVAGKWMSADVINVSASGSSVAKGESLRDTALTLRAAGADALIIRHPASGAAQQLAEWTVEEDGGGPSVINAGDGTHEHPTQALLDALTIRQRLGSVEGKRVVIVGDVLHSRVARSNVTLLHTLGAEVVLVSPPTLLPRGVENWPVTVSYDLDAELPAADAVLMLRVQAERMNGSFFPSAREYSVRYGLSEKRQAMLPDRAIVLHPGPMVRGMEISFPVADSPQSAVLQQVSNGVHVRMAVLFHLLVGADREAINV</sequence>
<reference key="1">
    <citation type="submission" date="2006-10" db="EMBL/GenBank/DDBJ databases">
        <authorList>
            <person name="Fleischmann R.D."/>
            <person name="Dodson R.J."/>
            <person name="Haft D.H."/>
            <person name="Merkel J.S."/>
            <person name="Nelson W.C."/>
            <person name="Fraser C.M."/>
        </authorList>
    </citation>
    <scope>NUCLEOTIDE SEQUENCE [LARGE SCALE GENOMIC DNA]</scope>
    <source>
        <strain>ATCC 700084 / mc(2)155</strain>
    </source>
</reference>
<reference key="2">
    <citation type="journal article" date="2007" name="Genome Biol.">
        <title>Interrupted coding sequences in Mycobacterium smegmatis: authentic mutations or sequencing errors?</title>
        <authorList>
            <person name="Deshayes C."/>
            <person name="Perrodou E."/>
            <person name="Gallien S."/>
            <person name="Euphrasie D."/>
            <person name="Schaeffer C."/>
            <person name="Van-Dorsselaer A."/>
            <person name="Poch O."/>
            <person name="Lecompte O."/>
            <person name="Reyrat J.-M."/>
        </authorList>
    </citation>
    <scope>NUCLEOTIDE SEQUENCE [LARGE SCALE GENOMIC DNA]</scope>
    <source>
        <strain>ATCC 700084 / mc(2)155</strain>
    </source>
</reference>
<reference key="3">
    <citation type="journal article" date="2009" name="Genome Res.">
        <title>Ortho-proteogenomics: multiple proteomes investigation through orthology and a new MS-based protocol.</title>
        <authorList>
            <person name="Gallien S."/>
            <person name="Perrodou E."/>
            <person name="Carapito C."/>
            <person name="Deshayes C."/>
            <person name="Reyrat J.-M."/>
            <person name="Van Dorsselaer A."/>
            <person name="Poch O."/>
            <person name="Schaeffer C."/>
            <person name="Lecompte O."/>
        </authorList>
    </citation>
    <scope>NUCLEOTIDE SEQUENCE [LARGE SCALE GENOMIC DNA]</scope>
    <source>
        <strain>ATCC 700084 / mc(2)155</strain>
    </source>
</reference>
<protein>
    <recommendedName>
        <fullName evidence="1">Aspartate carbamoyltransferase catalytic subunit</fullName>
        <ecNumber evidence="1">2.1.3.2</ecNumber>
    </recommendedName>
    <alternativeName>
        <fullName evidence="1">Aspartate transcarbamylase</fullName>
        <shortName evidence="1">ATCase</shortName>
    </alternativeName>
</protein>
<gene>
    <name evidence="1" type="primary">pyrB</name>
    <name type="ordered locus">MSMEG_3043</name>
    <name type="ordered locus">MSMEI_2969</name>
</gene>
<evidence type="ECO:0000255" key="1">
    <source>
        <dbReference type="HAMAP-Rule" id="MF_00001"/>
    </source>
</evidence>
<proteinExistence type="inferred from homology"/>
<accession>A0QWS1</accession>
<accession>I7FL36</accession>
<comment type="function">
    <text evidence="1">Catalyzes the condensation of carbamoyl phosphate and aspartate to form carbamoyl aspartate and inorganic phosphate, the committed step in the de novo pyrimidine nucleotide biosynthesis pathway.</text>
</comment>
<comment type="catalytic activity">
    <reaction evidence="1">
        <text>carbamoyl phosphate + L-aspartate = N-carbamoyl-L-aspartate + phosphate + H(+)</text>
        <dbReference type="Rhea" id="RHEA:20013"/>
        <dbReference type="ChEBI" id="CHEBI:15378"/>
        <dbReference type="ChEBI" id="CHEBI:29991"/>
        <dbReference type="ChEBI" id="CHEBI:32814"/>
        <dbReference type="ChEBI" id="CHEBI:43474"/>
        <dbReference type="ChEBI" id="CHEBI:58228"/>
        <dbReference type="EC" id="2.1.3.2"/>
    </reaction>
</comment>
<comment type="pathway">
    <text evidence="1">Pyrimidine metabolism; UMP biosynthesis via de novo pathway; (S)-dihydroorotate from bicarbonate: step 2/3.</text>
</comment>
<comment type="subunit">
    <text evidence="1">Heterododecamer (2C3:3R2) of six catalytic PyrB chains organized as two trimers (C3), and six regulatory PyrI chains organized as three dimers (R2).</text>
</comment>
<comment type="similarity">
    <text evidence="1">Belongs to the aspartate/ornithine carbamoyltransferase superfamily. ATCase family.</text>
</comment>
<name>PYRB_MYCS2</name>
<keyword id="KW-0665">Pyrimidine biosynthesis</keyword>
<keyword id="KW-1185">Reference proteome</keyword>
<keyword id="KW-0808">Transferase</keyword>
<feature type="chain" id="PRO_0000301591" description="Aspartate carbamoyltransferase catalytic subunit">
    <location>
        <begin position="1"/>
        <end position="318"/>
    </location>
</feature>
<feature type="binding site" evidence="1">
    <location>
        <position position="57"/>
    </location>
    <ligand>
        <name>carbamoyl phosphate</name>
        <dbReference type="ChEBI" id="CHEBI:58228"/>
    </ligand>
</feature>
<feature type="binding site" evidence="1">
    <location>
        <position position="58"/>
    </location>
    <ligand>
        <name>carbamoyl phosphate</name>
        <dbReference type="ChEBI" id="CHEBI:58228"/>
    </ligand>
</feature>
<feature type="binding site" evidence="1">
    <location>
        <position position="85"/>
    </location>
    <ligand>
        <name>L-aspartate</name>
        <dbReference type="ChEBI" id="CHEBI:29991"/>
    </ligand>
</feature>
<feature type="binding site" evidence="1">
    <location>
        <position position="107"/>
    </location>
    <ligand>
        <name>carbamoyl phosphate</name>
        <dbReference type="ChEBI" id="CHEBI:58228"/>
    </ligand>
</feature>
<feature type="binding site" evidence="1">
    <location>
        <position position="141"/>
    </location>
    <ligand>
        <name>carbamoyl phosphate</name>
        <dbReference type="ChEBI" id="CHEBI:58228"/>
    </ligand>
</feature>
<feature type="binding site" evidence="1">
    <location>
        <position position="144"/>
    </location>
    <ligand>
        <name>carbamoyl phosphate</name>
        <dbReference type="ChEBI" id="CHEBI:58228"/>
    </ligand>
</feature>
<feature type="binding site" evidence="1">
    <location>
        <position position="174"/>
    </location>
    <ligand>
        <name>L-aspartate</name>
        <dbReference type="ChEBI" id="CHEBI:29991"/>
    </ligand>
</feature>
<feature type="binding site" evidence="1">
    <location>
        <position position="228"/>
    </location>
    <ligand>
        <name>L-aspartate</name>
        <dbReference type="ChEBI" id="CHEBI:29991"/>
    </ligand>
</feature>
<feature type="binding site" evidence="1">
    <location>
        <position position="269"/>
    </location>
    <ligand>
        <name>carbamoyl phosphate</name>
        <dbReference type="ChEBI" id="CHEBI:58228"/>
    </ligand>
</feature>
<feature type="binding site" evidence="1">
    <location>
        <position position="270"/>
    </location>
    <ligand>
        <name>carbamoyl phosphate</name>
        <dbReference type="ChEBI" id="CHEBI:58228"/>
    </ligand>
</feature>
<organism>
    <name type="scientific">Mycolicibacterium smegmatis (strain ATCC 700084 / mc(2)155)</name>
    <name type="common">Mycobacterium smegmatis</name>
    <dbReference type="NCBI Taxonomy" id="246196"/>
    <lineage>
        <taxon>Bacteria</taxon>
        <taxon>Bacillati</taxon>
        <taxon>Actinomycetota</taxon>
        <taxon>Actinomycetes</taxon>
        <taxon>Mycobacteriales</taxon>
        <taxon>Mycobacteriaceae</taxon>
        <taxon>Mycolicibacterium</taxon>
    </lineage>
</organism>